<name>RL13_PARXL</name>
<keyword id="KW-1185">Reference proteome</keyword>
<keyword id="KW-0687">Ribonucleoprotein</keyword>
<keyword id="KW-0689">Ribosomal protein</keyword>
<feature type="chain" id="PRO_0000261705" description="Large ribosomal subunit protein uL13">
    <location>
        <begin position="1"/>
        <end position="142"/>
    </location>
</feature>
<reference key="1">
    <citation type="journal article" date="2006" name="Proc. Natl. Acad. Sci. U.S.A.">
        <title>Burkholderia xenovorans LB400 harbors a multi-replicon, 9.73-Mbp genome shaped for versatility.</title>
        <authorList>
            <person name="Chain P.S.G."/>
            <person name="Denef V.J."/>
            <person name="Konstantinidis K.T."/>
            <person name="Vergez L.M."/>
            <person name="Agullo L."/>
            <person name="Reyes V.L."/>
            <person name="Hauser L."/>
            <person name="Cordova M."/>
            <person name="Gomez L."/>
            <person name="Gonzalez M."/>
            <person name="Land M."/>
            <person name="Lao V."/>
            <person name="Larimer F."/>
            <person name="LiPuma J.J."/>
            <person name="Mahenthiralingam E."/>
            <person name="Malfatti S.A."/>
            <person name="Marx C.J."/>
            <person name="Parnell J.J."/>
            <person name="Ramette A."/>
            <person name="Richardson P."/>
            <person name="Seeger M."/>
            <person name="Smith D."/>
            <person name="Spilker T."/>
            <person name="Sul W.J."/>
            <person name="Tsoi T.V."/>
            <person name="Ulrich L.E."/>
            <person name="Zhulin I.B."/>
            <person name="Tiedje J.M."/>
        </authorList>
    </citation>
    <scope>NUCLEOTIDE SEQUENCE [LARGE SCALE GENOMIC DNA]</scope>
    <source>
        <strain>LB400</strain>
    </source>
</reference>
<protein>
    <recommendedName>
        <fullName evidence="1">Large ribosomal subunit protein uL13</fullName>
    </recommendedName>
    <alternativeName>
        <fullName evidence="2">50S ribosomal protein L13</fullName>
    </alternativeName>
</protein>
<gene>
    <name evidence="1" type="primary">rplM</name>
    <name type="ordered locus">Bxeno_A3789</name>
    <name type="ORF">Bxe_A0607</name>
</gene>
<organism>
    <name type="scientific">Paraburkholderia xenovorans (strain LB400)</name>
    <dbReference type="NCBI Taxonomy" id="266265"/>
    <lineage>
        <taxon>Bacteria</taxon>
        <taxon>Pseudomonadati</taxon>
        <taxon>Pseudomonadota</taxon>
        <taxon>Betaproteobacteria</taxon>
        <taxon>Burkholderiales</taxon>
        <taxon>Burkholderiaceae</taxon>
        <taxon>Paraburkholderia</taxon>
    </lineage>
</organism>
<dbReference type="EMBL" id="CP000270">
    <property type="protein sequence ID" value="ABE32327.1"/>
    <property type="molecule type" value="Genomic_DNA"/>
</dbReference>
<dbReference type="RefSeq" id="WP_007180422.1">
    <property type="nucleotide sequence ID" value="NZ_CP008760.1"/>
</dbReference>
<dbReference type="SMR" id="Q13UB2"/>
<dbReference type="STRING" id="266265.Bxe_A0607"/>
<dbReference type="GeneID" id="66516029"/>
<dbReference type="KEGG" id="bxb:DR64_2775"/>
<dbReference type="KEGG" id="bxe:Bxe_A0607"/>
<dbReference type="eggNOG" id="COG0102">
    <property type="taxonomic scope" value="Bacteria"/>
</dbReference>
<dbReference type="OrthoDB" id="9801330at2"/>
<dbReference type="Proteomes" id="UP000001817">
    <property type="component" value="Chromosome 1"/>
</dbReference>
<dbReference type="GO" id="GO:0022625">
    <property type="term" value="C:cytosolic large ribosomal subunit"/>
    <property type="evidence" value="ECO:0007669"/>
    <property type="project" value="TreeGrafter"/>
</dbReference>
<dbReference type="GO" id="GO:0003729">
    <property type="term" value="F:mRNA binding"/>
    <property type="evidence" value="ECO:0007669"/>
    <property type="project" value="TreeGrafter"/>
</dbReference>
<dbReference type="GO" id="GO:0003735">
    <property type="term" value="F:structural constituent of ribosome"/>
    <property type="evidence" value="ECO:0007669"/>
    <property type="project" value="InterPro"/>
</dbReference>
<dbReference type="GO" id="GO:0017148">
    <property type="term" value="P:negative regulation of translation"/>
    <property type="evidence" value="ECO:0007669"/>
    <property type="project" value="TreeGrafter"/>
</dbReference>
<dbReference type="GO" id="GO:0006412">
    <property type="term" value="P:translation"/>
    <property type="evidence" value="ECO:0007669"/>
    <property type="project" value="UniProtKB-UniRule"/>
</dbReference>
<dbReference type="CDD" id="cd00392">
    <property type="entry name" value="Ribosomal_L13"/>
    <property type="match status" value="1"/>
</dbReference>
<dbReference type="FunFam" id="3.90.1180.10:FF:000001">
    <property type="entry name" value="50S ribosomal protein L13"/>
    <property type="match status" value="1"/>
</dbReference>
<dbReference type="Gene3D" id="3.90.1180.10">
    <property type="entry name" value="Ribosomal protein L13"/>
    <property type="match status" value="1"/>
</dbReference>
<dbReference type="HAMAP" id="MF_01366">
    <property type="entry name" value="Ribosomal_uL13"/>
    <property type="match status" value="1"/>
</dbReference>
<dbReference type="InterPro" id="IPR005822">
    <property type="entry name" value="Ribosomal_uL13"/>
</dbReference>
<dbReference type="InterPro" id="IPR005823">
    <property type="entry name" value="Ribosomal_uL13_bac-type"/>
</dbReference>
<dbReference type="InterPro" id="IPR036899">
    <property type="entry name" value="Ribosomal_uL13_sf"/>
</dbReference>
<dbReference type="NCBIfam" id="TIGR01066">
    <property type="entry name" value="rplM_bact"/>
    <property type="match status" value="1"/>
</dbReference>
<dbReference type="PANTHER" id="PTHR11545:SF2">
    <property type="entry name" value="LARGE RIBOSOMAL SUBUNIT PROTEIN UL13M"/>
    <property type="match status" value="1"/>
</dbReference>
<dbReference type="PANTHER" id="PTHR11545">
    <property type="entry name" value="RIBOSOMAL PROTEIN L13"/>
    <property type="match status" value="1"/>
</dbReference>
<dbReference type="Pfam" id="PF00572">
    <property type="entry name" value="Ribosomal_L13"/>
    <property type="match status" value="1"/>
</dbReference>
<dbReference type="PIRSF" id="PIRSF002181">
    <property type="entry name" value="Ribosomal_L13"/>
    <property type="match status" value="1"/>
</dbReference>
<dbReference type="SUPFAM" id="SSF52161">
    <property type="entry name" value="Ribosomal protein L13"/>
    <property type="match status" value="1"/>
</dbReference>
<comment type="function">
    <text evidence="1">This protein is one of the early assembly proteins of the 50S ribosomal subunit, although it is not seen to bind rRNA by itself. It is important during the early stages of 50S assembly.</text>
</comment>
<comment type="subunit">
    <text evidence="1">Part of the 50S ribosomal subunit.</text>
</comment>
<comment type="similarity">
    <text evidence="1">Belongs to the universal ribosomal protein uL13 family.</text>
</comment>
<evidence type="ECO:0000255" key="1">
    <source>
        <dbReference type="HAMAP-Rule" id="MF_01366"/>
    </source>
</evidence>
<evidence type="ECO:0000305" key="2"/>
<sequence length="142" mass="15907">MKTFSAKAHEVTREWYVIDATDKVLGRVASEVAHRLRGKHKPEFTPHVDTGDFIIVINAGKLRVTGNKATDKKYYRHSGYPGGIYETTFGKMQERFPGRALEKAVKGMLPKGPLGYAMIKKLKVYAEATHPHSAQQPKALEI</sequence>
<accession>Q13UB2</accession>
<proteinExistence type="inferred from homology"/>